<name>SYY_LACAC</name>
<dbReference type="EC" id="6.1.1.1" evidence="1"/>
<dbReference type="EMBL" id="CP000033">
    <property type="protein sequence ID" value="AAV42088.1"/>
    <property type="molecule type" value="Genomic_DNA"/>
</dbReference>
<dbReference type="RefSeq" id="WP_003548823.1">
    <property type="nucleotide sequence ID" value="NC_006814.3"/>
</dbReference>
<dbReference type="RefSeq" id="YP_193119.1">
    <property type="nucleotide sequence ID" value="NC_006814.3"/>
</dbReference>
<dbReference type="SMR" id="Q5FMI6"/>
<dbReference type="STRING" id="272621.LBA0192"/>
<dbReference type="GeneID" id="93290704"/>
<dbReference type="KEGG" id="lac:LBA0192"/>
<dbReference type="PATRIC" id="fig|272621.13.peg.183"/>
<dbReference type="eggNOG" id="COG0162">
    <property type="taxonomic scope" value="Bacteria"/>
</dbReference>
<dbReference type="HOGENOM" id="CLU_024003_0_3_9"/>
<dbReference type="OrthoDB" id="9804243at2"/>
<dbReference type="BioCyc" id="LACI272621:G1G49-185-MONOMER"/>
<dbReference type="Proteomes" id="UP000006381">
    <property type="component" value="Chromosome"/>
</dbReference>
<dbReference type="GO" id="GO:0005829">
    <property type="term" value="C:cytosol"/>
    <property type="evidence" value="ECO:0007669"/>
    <property type="project" value="TreeGrafter"/>
</dbReference>
<dbReference type="GO" id="GO:0005524">
    <property type="term" value="F:ATP binding"/>
    <property type="evidence" value="ECO:0007669"/>
    <property type="project" value="UniProtKB-UniRule"/>
</dbReference>
<dbReference type="GO" id="GO:0003723">
    <property type="term" value="F:RNA binding"/>
    <property type="evidence" value="ECO:0007669"/>
    <property type="project" value="UniProtKB-KW"/>
</dbReference>
<dbReference type="GO" id="GO:0004831">
    <property type="term" value="F:tyrosine-tRNA ligase activity"/>
    <property type="evidence" value="ECO:0007669"/>
    <property type="project" value="UniProtKB-UniRule"/>
</dbReference>
<dbReference type="GO" id="GO:0006437">
    <property type="term" value="P:tyrosyl-tRNA aminoacylation"/>
    <property type="evidence" value="ECO:0007669"/>
    <property type="project" value="UniProtKB-UniRule"/>
</dbReference>
<dbReference type="CDD" id="cd00165">
    <property type="entry name" value="S4"/>
    <property type="match status" value="1"/>
</dbReference>
<dbReference type="CDD" id="cd00805">
    <property type="entry name" value="TyrRS_core"/>
    <property type="match status" value="1"/>
</dbReference>
<dbReference type="FunFam" id="1.10.240.10:FF:000001">
    <property type="entry name" value="Tyrosine--tRNA ligase"/>
    <property type="match status" value="1"/>
</dbReference>
<dbReference type="Gene3D" id="3.40.50.620">
    <property type="entry name" value="HUPs"/>
    <property type="match status" value="1"/>
</dbReference>
<dbReference type="Gene3D" id="3.10.290.10">
    <property type="entry name" value="RNA-binding S4 domain"/>
    <property type="match status" value="1"/>
</dbReference>
<dbReference type="Gene3D" id="1.10.240.10">
    <property type="entry name" value="Tyrosyl-Transfer RNA Synthetase"/>
    <property type="match status" value="1"/>
</dbReference>
<dbReference type="HAMAP" id="MF_02006">
    <property type="entry name" value="Tyr_tRNA_synth_type1"/>
    <property type="match status" value="1"/>
</dbReference>
<dbReference type="InterPro" id="IPR001412">
    <property type="entry name" value="aa-tRNA-synth_I_CS"/>
</dbReference>
<dbReference type="InterPro" id="IPR002305">
    <property type="entry name" value="aa-tRNA-synth_Ic"/>
</dbReference>
<dbReference type="InterPro" id="IPR014729">
    <property type="entry name" value="Rossmann-like_a/b/a_fold"/>
</dbReference>
<dbReference type="InterPro" id="IPR036986">
    <property type="entry name" value="S4_RNA-bd_sf"/>
</dbReference>
<dbReference type="InterPro" id="IPR054608">
    <property type="entry name" value="SYY-like_C"/>
</dbReference>
<dbReference type="InterPro" id="IPR002307">
    <property type="entry name" value="Tyr-tRNA-ligase"/>
</dbReference>
<dbReference type="InterPro" id="IPR024088">
    <property type="entry name" value="Tyr-tRNA-ligase_bac-type"/>
</dbReference>
<dbReference type="InterPro" id="IPR024107">
    <property type="entry name" value="Tyr-tRNA-ligase_bac_1"/>
</dbReference>
<dbReference type="NCBIfam" id="TIGR00234">
    <property type="entry name" value="tyrS"/>
    <property type="match status" value="1"/>
</dbReference>
<dbReference type="PANTHER" id="PTHR11766:SF0">
    <property type="entry name" value="TYROSINE--TRNA LIGASE, MITOCHONDRIAL"/>
    <property type="match status" value="1"/>
</dbReference>
<dbReference type="PANTHER" id="PTHR11766">
    <property type="entry name" value="TYROSYL-TRNA SYNTHETASE"/>
    <property type="match status" value="1"/>
</dbReference>
<dbReference type="Pfam" id="PF22421">
    <property type="entry name" value="SYY_C-terminal"/>
    <property type="match status" value="1"/>
</dbReference>
<dbReference type="Pfam" id="PF00579">
    <property type="entry name" value="tRNA-synt_1b"/>
    <property type="match status" value="1"/>
</dbReference>
<dbReference type="PRINTS" id="PR01040">
    <property type="entry name" value="TRNASYNTHTYR"/>
</dbReference>
<dbReference type="SUPFAM" id="SSF55174">
    <property type="entry name" value="Alpha-L RNA-binding motif"/>
    <property type="match status" value="1"/>
</dbReference>
<dbReference type="SUPFAM" id="SSF52374">
    <property type="entry name" value="Nucleotidylyl transferase"/>
    <property type="match status" value="1"/>
</dbReference>
<dbReference type="PROSITE" id="PS00178">
    <property type="entry name" value="AA_TRNA_LIGASE_I"/>
    <property type="match status" value="1"/>
</dbReference>
<dbReference type="PROSITE" id="PS50889">
    <property type="entry name" value="S4"/>
    <property type="match status" value="1"/>
</dbReference>
<comment type="function">
    <text evidence="1">Catalyzes the attachment of tyrosine to tRNA(Tyr) in a two-step reaction: tyrosine is first activated by ATP to form Tyr-AMP and then transferred to the acceptor end of tRNA(Tyr).</text>
</comment>
<comment type="catalytic activity">
    <reaction evidence="1">
        <text>tRNA(Tyr) + L-tyrosine + ATP = L-tyrosyl-tRNA(Tyr) + AMP + diphosphate + H(+)</text>
        <dbReference type="Rhea" id="RHEA:10220"/>
        <dbReference type="Rhea" id="RHEA-COMP:9706"/>
        <dbReference type="Rhea" id="RHEA-COMP:9707"/>
        <dbReference type="ChEBI" id="CHEBI:15378"/>
        <dbReference type="ChEBI" id="CHEBI:30616"/>
        <dbReference type="ChEBI" id="CHEBI:33019"/>
        <dbReference type="ChEBI" id="CHEBI:58315"/>
        <dbReference type="ChEBI" id="CHEBI:78442"/>
        <dbReference type="ChEBI" id="CHEBI:78536"/>
        <dbReference type="ChEBI" id="CHEBI:456215"/>
        <dbReference type="EC" id="6.1.1.1"/>
    </reaction>
</comment>
<comment type="subunit">
    <text evidence="1">Homodimer.</text>
</comment>
<comment type="subcellular location">
    <subcellularLocation>
        <location evidence="1">Cytoplasm</location>
    </subcellularLocation>
</comment>
<comment type="similarity">
    <text evidence="1">Belongs to the class-I aminoacyl-tRNA synthetase family. TyrS type 1 subfamily.</text>
</comment>
<protein>
    <recommendedName>
        <fullName evidence="1">Tyrosine--tRNA ligase</fullName>
        <ecNumber evidence="1">6.1.1.1</ecNumber>
    </recommendedName>
    <alternativeName>
        <fullName evidence="1">Tyrosyl-tRNA synthetase</fullName>
        <shortName evidence="1">TyrRS</shortName>
    </alternativeName>
</protein>
<keyword id="KW-0030">Aminoacyl-tRNA synthetase</keyword>
<keyword id="KW-0067">ATP-binding</keyword>
<keyword id="KW-0963">Cytoplasm</keyword>
<keyword id="KW-0436">Ligase</keyword>
<keyword id="KW-0547">Nucleotide-binding</keyword>
<keyword id="KW-0648">Protein biosynthesis</keyword>
<keyword id="KW-1185">Reference proteome</keyword>
<keyword id="KW-0694">RNA-binding</keyword>
<organism>
    <name type="scientific">Lactobacillus acidophilus (strain ATCC 700396 / NCK56 / N2 / NCFM)</name>
    <dbReference type="NCBI Taxonomy" id="272621"/>
    <lineage>
        <taxon>Bacteria</taxon>
        <taxon>Bacillati</taxon>
        <taxon>Bacillota</taxon>
        <taxon>Bacilli</taxon>
        <taxon>Lactobacillales</taxon>
        <taxon>Lactobacillaceae</taxon>
        <taxon>Lactobacillus</taxon>
    </lineage>
</organism>
<gene>
    <name evidence="1" type="primary">tyrS</name>
    <name type="ordered locus">LBA0192</name>
</gene>
<reference key="1">
    <citation type="journal article" date="2005" name="Proc. Natl. Acad. Sci. U.S.A.">
        <title>Complete genome sequence of the probiotic lactic acid bacterium Lactobacillus acidophilus NCFM.</title>
        <authorList>
            <person name="Altermann E."/>
            <person name="Russell W.M."/>
            <person name="Azcarate-Peril M.A."/>
            <person name="Barrangou R."/>
            <person name="Buck B.L."/>
            <person name="McAuliffe O."/>
            <person name="Souther N."/>
            <person name="Dobson A."/>
            <person name="Duong T."/>
            <person name="Callanan M."/>
            <person name="Lick S."/>
            <person name="Hamrick A."/>
            <person name="Cano R."/>
            <person name="Klaenhammer T.R."/>
        </authorList>
    </citation>
    <scope>NUCLEOTIDE SEQUENCE [LARGE SCALE GENOMIC DNA]</scope>
    <source>
        <strain>ATCC 700396 / NCK56 / N2 / NCFM</strain>
    </source>
</reference>
<evidence type="ECO:0000255" key="1">
    <source>
        <dbReference type="HAMAP-Rule" id="MF_02006"/>
    </source>
</evidence>
<sequence length="420" mass="47477">MAKFDILEDLKWRGAINQETDEEGLRKYLAEHDDLALYCGTDPTGDSLHIGHLIPFMILKRFQMAGYHPVILIGGGTGAIGDPSGRTTERVLQTAEQVKHNEESLTNQMKKLFGTENFEIRNNAEWLGKINLIDFLRDYGKYFQVNNMINKDVVASRLENGISFTEFTYQILQAIDFYHLNKDDGVQLQIGGGDQWGNITAGIDLIHKLEGSDRPAFGLTIPLMLKADGTKFGKSAGGAVWLDPEKTSPYEFYQFWINQDDRDVVKYLKYFTFLSHEEIEDLAEKTEKEPWKRAAQKKLAEEVTKFVHGEEGLKEAQMITDALFSGDIKNLSVTQIEQGLKNAPSAEAGSEKKNIVDFLVDTKIEPSKRQAREDVKNGAIYVNGDREQSVDFEVDPSSAFDGKYVIIRKGKRKYTLVTIK</sequence>
<proteinExistence type="inferred from homology"/>
<feature type="chain" id="PRO_0000234715" description="Tyrosine--tRNA ligase">
    <location>
        <begin position="1"/>
        <end position="420"/>
    </location>
</feature>
<feature type="domain" description="S4 RNA-binding" evidence="1">
    <location>
        <begin position="353"/>
        <end position="419"/>
    </location>
</feature>
<feature type="short sequence motif" description="'HIGH' region">
    <location>
        <begin position="43"/>
        <end position="52"/>
    </location>
</feature>
<feature type="short sequence motif" description="'KMSKS' region">
    <location>
        <begin position="231"/>
        <end position="235"/>
    </location>
</feature>
<feature type="binding site" evidence="1">
    <location>
        <position position="38"/>
    </location>
    <ligand>
        <name>L-tyrosine</name>
        <dbReference type="ChEBI" id="CHEBI:58315"/>
    </ligand>
</feature>
<feature type="binding site" evidence="1">
    <location>
        <position position="169"/>
    </location>
    <ligand>
        <name>L-tyrosine</name>
        <dbReference type="ChEBI" id="CHEBI:58315"/>
    </ligand>
</feature>
<feature type="binding site" evidence="1">
    <location>
        <position position="173"/>
    </location>
    <ligand>
        <name>L-tyrosine</name>
        <dbReference type="ChEBI" id="CHEBI:58315"/>
    </ligand>
</feature>
<feature type="binding site" evidence="1">
    <location>
        <position position="234"/>
    </location>
    <ligand>
        <name>ATP</name>
        <dbReference type="ChEBI" id="CHEBI:30616"/>
    </ligand>
</feature>
<accession>Q5FMI6</accession>